<dbReference type="EC" id="6.1.1.20" evidence="1"/>
<dbReference type="EMBL" id="AL445564">
    <property type="protein sequence ID" value="CAC13520.1"/>
    <property type="molecule type" value="Genomic_DNA"/>
</dbReference>
<dbReference type="PIR" id="C90555">
    <property type="entry name" value="C90555"/>
</dbReference>
<dbReference type="RefSeq" id="WP_010925151.1">
    <property type="nucleotide sequence ID" value="NC_002771.1"/>
</dbReference>
<dbReference type="SMR" id="Q98QL4"/>
<dbReference type="STRING" id="272635.gene:17576938"/>
<dbReference type="KEGG" id="mpu:MYPU_3470"/>
<dbReference type="eggNOG" id="COG0072">
    <property type="taxonomic scope" value="Bacteria"/>
</dbReference>
<dbReference type="eggNOG" id="COG0073">
    <property type="taxonomic scope" value="Bacteria"/>
</dbReference>
<dbReference type="HOGENOM" id="CLU_016891_2_0_14"/>
<dbReference type="BioCyc" id="MPUL272635:G1GT6-347-MONOMER"/>
<dbReference type="Proteomes" id="UP000000528">
    <property type="component" value="Chromosome"/>
</dbReference>
<dbReference type="GO" id="GO:0009328">
    <property type="term" value="C:phenylalanine-tRNA ligase complex"/>
    <property type="evidence" value="ECO:0007669"/>
    <property type="project" value="TreeGrafter"/>
</dbReference>
<dbReference type="GO" id="GO:0005524">
    <property type="term" value="F:ATP binding"/>
    <property type="evidence" value="ECO:0007669"/>
    <property type="project" value="UniProtKB-UniRule"/>
</dbReference>
<dbReference type="GO" id="GO:0000287">
    <property type="term" value="F:magnesium ion binding"/>
    <property type="evidence" value="ECO:0007669"/>
    <property type="project" value="UniProtKB-UniRule"/>
</dbReference>
<dbReference type="GO" id="GO:0004826">
    <property type="term" value="F:phenylalanine-tRNA ligase activity"/>
    <property type="evidence" value="ECO:0007669"/>
    <property type="project" value="UniProtKB-UniRule"/>
</dbReference>
<dbReference type="GO" id="GO:0000049">
    <property type="term" value="F:tRNA binding"/>
    <property type="evidence" value="ECO:0007669"/>
    <property type="project" value="UniProtKB-KW"/>
</dbReference>
<dbReference type="GO" id="GO:0006432">
    <property type="term" value="P:phenylalanyl-tRNA aminoacylation"/>
    <property type="evidence" value="ECO:0007669"/>
    <property type="project" value="UniProtKB-UniRule"/>
</dbReference>
<dbReference type="CDD" id="cd02796">
    <property type="entry name" value="tRNA_bind_bactPheRS"/>
    <property type="match status" value="1"/>
</dbReference>
<dbReference type="Gene3D" id="3.30.56.10">
    <property type="match status" value="2"/>
</dbReference>
<dbReference type="Gene3D" id="3.30.930.10">
    <property type="entry name" value="Bira Bifunctional Protein, Domain 2"/>
    <property type="match status" value="1"/>
</dbReference>
<dbReference type="Gene3D" id="2.40.50.140">
    <property type="entry name" value="Nucleic acid-binding proteins"/>
    <property type="match status" value="1"/>
</dbReference>
<dbReference type="Gene3D" id="3.50.40.10">
    <property type="entry name" value="Phenylalanyl-trna Synthetase, Chain B, domain 3"/>
    <property type="match status" value="1"/>
</dbReference>
<dbReference type="HAMAP" id="MF_00283">
    <property type="entry name" value="Phe_tRNA_synth_beta1"/>
    <property type="match status" value="1"/>
</dbReference>
<dbReference type="InterPro" id="IPR045864">
    <property type="entry name" value="aa-tRNA-synth_II/BPL/LPL"/>
</dbReference>
<dbReference type="InterPro" id="IPR005146">
    <property type="entry name" value="B3/B4_tRNA-bd"/>
</dbReference>
<dbReference type="InterPro" id="IPR009061">
    <property type="entry name" value="DNA-bd_dom_put_sf"/>
</dbReference>
<dbReference type="InterPro" id="IPR012340">
    <property type="entry name" value="NA-bd_OB-fold"/>
</dbReference>
<dbReference type="InterPro" id="IPR045060">
    <property type="entry name" value="Phe-tRNA-ligase_IIc_bsu"/>
</dbReference>
<dbReference type="InterPro" id="IPR004532">
    <property type="entry name" value="Phe-tRNA-ligase_IIc_bsu_bact"/>
</dbReference>
<dbReference type="InterPro" id="IPR020825">
    <property type="entry name" value="Phe-tRNA_synthase-like_B3/B4"/>
</dbReference>
<dbReference type="InterPro" id="IPR041616">
    <property type="entry name" value="PheRS_beta_core"/>
</dbReference>
<dbReference type="InterPro" id="IPR002547">
    <property type="entry name" value="tRNA-bd_dom"/>
</dbReference>
<dbReference type="InterPro" id="IPR033714">
    <property type="entry name" value="tRNA_bind_bactPheRS"/>
</dbReference>
<dbReference type="InterPro" id="IPR005147">
    <property type="entry name" value="tRNA_synthase_B5-dom"/>
</dbReference>
<dbReference type="NCBIfam" id="TIGR00472">
    <property type="entry name" value="pheT_bact"/>
    <property type="match status" value="1"/>
</dbReference>
<dbReference type="NCBIfam" id="NF001882">
    <property type="entry name" value="PRK00629.5-4"/>
    <property type="match status" value="1"/>
</dbReference>
<dbReference type="PANTHER" id="PTHR10947:SF0">
    <property type="entry name" value="PHENYLALANINE--TRNA LIGASE BETA SUBUNIT"/>
    <property type="match status" value="1"/>
</dbReference>
<dbReference type="PANTHER" id="PTHR10947">
    <property type="entry name" value="PHENYLALANYL-TRNA SYNTHETASE BETA CHAIN AND LEUCINE-RICH REPEAT-CONTAINING PROTEIN 47"/>
    <property type="match status" value="1"/>
</dbReference>
<dbReference type="Pfam" id="PF03483">
    <property type="entry name" value="B3_4"/>
    <property type="match status" value="1"/>
</dbReference>
<dbReference type="Pfam" id="PF03484">
    <property type="entry name" value="B5"/>
    <property type="match status" value="1"/>
</dbReference>
<dbReference type="Pfam" id="PF01588">
    <property type="entry name" value="tRNA_bind"/>
    <property type="match status" value="1"/>
</dbReference>
<dbReference type="Pfam" id="PF17759">
    <property type="entry name" value="tRNA_synthFbeta"/>
    <property type="match status" value="1"/>
</dbReference>
<dbReference type="SMART" id="SM00873">
    <property type="entry name" value="B3_4"/>
    <property type="match status" value="1"/>
</dbReference>
<dbReference type="SMART" id="SM00874">
    <property type="entry name" value="B5"/>
    <property type="match status" value="1"/>
</dbReference>
<dbReference type="SUPFAM" id="SSF55681">
    <property type="entry name" value="Class II aaRS and biotin synthetases"/>
    <property type="match status" value="1"/>
</dbReference>
<dbReference type="SUPFAM" id="SSF50249">
    <property type="entry name" value="Nucleic acid-binding proteins"/>
    <property type="match status" value="1"/>
</dbReference>
<dbReference type="SUPFAM" id="SSF56037">
    <property type="entry name" value="PheT/TilS domain"/>
    <property type="match status" value="1"/>
</dbReference>
<dbReference type="SUPFAM" id="SSF46955">
    <property type="entry name" value="Putative DNA-binding domain"/>
    <property type="match status" value="1"/>
</dbReference>
<dbReference type="PROSITE" id="PS51483">
    <property type="entry name" value="B5"/>
    <property type="match status" value="1"/>
</dbReference>
<dbReference type="PROSITE" id="PS50886">
    <property type="entry name" value="TRBD"/>
    <property type="match status" value="1"/>
</dbReference>
<proteinExistence type="inferred from homology"/>
<comment type="catalytic activity">
    <reaction evidence="1">
        <text>tRNA(Phe) + L-phenylalanine + ATP = L-phenylalanyl-tRNA(Phe) + AMP + diphosphate + H(+)</text>
        <dbReference type="Rhea" id="RHEA:19413"/>
        <dbReference type="Rhea" id="RHEA-COMP:9668"/>
        <dbReference type="Rhea" id="RHEA-COMP:9699"/>
        <dbReference type="ChEBI" id="CHEBI:15378"/>
        <dbReference type="ChEBI" id="CHEBI:30616"/>
        <dbReference type="ChEBI" id="CHEBI:33019"/>
        <dbReference type="ChEBI" id="CHEBI:58095"/>
        <dbReference type="ChEBI" id="CHEBI:78442"/>
        <dbReference type="ChEBI" id="CHEBI:78531"/>
        <dbReference type="ChEBI" id="CHEBI:456215"/>
        <dbReference type="EC" id="6.1.1.20"/>
    </reaction>
</comment>
<comment type="cofactor">
    <cofactor evidence="1">
        <name>Mg(2+)</name>
        <dbReference type="ChEBI" id="CHEBI:18420"/>
    </cofactor>
    <text evidence="1">Binds 2 magnesium ions per tetramer.</text>
</comment>
<comment type="subunit">
    <text evidence="1">Tetramer of two alpha and two beta subunits.</text>
</comment>
<comment type="subcellular location">
    <subcellularLocation>
        <location evidence="1">Cytoplasm</location>
    </subcellularLocation>
</comment>
<comment type="similarity">
    <text evidence="1">Belongs to the phenylalanyl-tRNA synthetase beta subunit family. Type 1 subfamily.</text>
</comment>
<reference key="1">
    <citation type="journal article" date="2001" name="Nucleic Acids Res.">
        <title>The complete genome sequence of the murine respiratory pathogen Mycoplasma pulmonis.</title>
        <authorList>
            <person name="Chambaud I."/>
            <person name="Heilig R."/>
            <person name="Ferris S."/>
            <person name="Barbe V."/>
            <person name="Samson D."/>
            <person name="Galisson F."/>
            <person name="Moszer I."/>
            <person name="Dybvig K."/>
            <person name="Wroblewski H."/>
            <person name="Viari A."/>
            <person name="Rocha E.P.C."/>
            <person name="Blanchard A."/>
        </authorList>
    </citation>
    <scope>NUCLEOTIDE SEQUENCE [LARGE SCALE GENOMIC DNA]</scope>
    <source>
        <strain>UAB CTIP</strain>
    </source>
</reference>
<accession>Q98QL4</accession>
<sequence length="718" mass="83815">MLFSINKLRDLANLDKQITNDQIIDAINKIGFEVESVKNFLNVSKIKFGLIKKVYKNPNASNLNVCEIEFEDKMRIIQTTAQNVEQNKYIVAFVENSTFGKIKIEAKEIKGTFSQGMLCSLEELGFDKSLIRDEFQDKIFLLDKADLKQDPIDFFDLDDQIVDVSILSNRSDANGYFIMALELSAFFETKTNFEIKNEIFKIHPNLKVDETNTLDFVLIEPQKELKKISLKDQILIMKSNIKTFNDLVDLTNLNLIMNAMPTHVYDKDKISNEISVKKVSQEVSILGNKKISLDNNLVVCSKEKPISIAGVIGIADFGSDQNTKNFVFEIGRFKTLDIQKSIKSVKLDTQSSKLSSKKISSGTFKMALNFLTSYFDSQVLVSKNLKDKKESFNFVWEDLNKFLNTDVKKMPHFNRVLKSLNILGFEFKDNKVYLPTYRHDIEHVQDILEEFLRFYGYENLVFEAPNIKNFETKNYEEYLNFIPYLNYSETRTYSLVSKDKNIFNPFNFKENINLETFHSKEREQIRNSMILSMEEVLQYNLKRKVENVNIFEIGIINNSQRSLALLSNQKSFNRFKEDVESILKDKLYSFEKGGFDFSHPLESIIIKDNDQLIGYIIRANAKDFEEDFVYAEILIDKLRNKKIENKSLNYLPLKTLDINFEVPSENGLFEVYKTLEKNEKIYSYKLIDHYQKNQISIYTIRIWAFEENIEELKTLFNL</sequence>
<organism>
    <name type="scientific">Mycoplasmopsis pulmonis (strain UAB CTIP)</name>
    <name type="common">Mycoplasma pulmonis</name>
    <dbReference type="NCBI Taxonomy" id="272635"/>
    <lineage>
        <taxon>Bacteria</taxon>
        <taxon>Bacillati</taxon>
        <taxon>Mycoplasmatota</taxon>
        <taxon>Mycoplasmoidales</taxon>
        <taxon>Metamycoplasmataceae</taxon>
        <taxon>Mycoplasmopsis</taxon>
    </lineage>
</organism>
<keyword id="KW-0030">Aminoacyl-tRNA synthetase</keyword>
<keyword id="KW-0067">ATP-binding</keyword>
<keyword id="KW-0963">Cytoplasm</keyword>
<keyword id="KW-0436">Ligase</keyword>
<keyword id="KW-0460">Magnesium</keyword>
<keyword id="KW-0479">Metal-binding</keyword>
<keyword id="KW-0547">Nucleotide-binding</keyword>
<keyword id="KW-0648">Protein biosynthesis</keyword>
<keyword id="KW-1185">Reference proteome</keyword>
<keyword id="KW-0694">RNA-binding</keyword>
<keyword id="KW-0820">tRNA-binding</keyword>
<evidence type="ECO:0000255" key="1">
    <source>
        <dbReference type="HAMAP-Rule" id="MF_00283"/>
    </source>
</evidence>
<protein>
    <recommendedName>
        <fullName evidence="1">Phenylalanine--tRNA ligase beta subunit</fullName>
        <ecNumber evidence="1">6.1.1.20</ecNumber>
    </recommendedName>
    <alternativeName>
        <fullName evidence="1">Phenylalanyl-tRNA synthetase beta subunit</fullName>
        <shortName evidence="1">PheRS</shortName>
    </alternativeName>
</protein>
<feature type="chain" id="PRO_0000232813" description="Phenylalanine--tRNA ligase beta subunit">
    <location>
        <begin position="1"/>
        <end position="718"/>
    </location>
</feature>
<feature type="domain" description="tRNA-binding" evidence="1">
    <location>
        <begin position="40"/>
        <end position="153"/>
    </location>
</feature>
<feature type="domain" description="B5" evidence="1">
    <location>
        <begin position="387"/>
        <end position="462"/>
    </location>
</feature>
<feature type="binding site" evidence="1">
    <location>
        <position position="440"/>
    </location>
    <ligand>
        <name>Mg(2+)</name>
        <dbReference type="ChEBI" id="CHEBI:18420"/>
        <note>shared with alpha subunit</note>
    </ligand>
</feature>
<feature type="binding site" evidence="1">
    <location>
        <position position="446"/>
    </location>
    <ligand>
        <name>Mg(2+)</name>
        <dbReference type="ChEBI" id="CHEBI:18420"/>
        <note>shared with alpha subunit</note>
    </ligand>
</feature>
<feature type="binding site" evidence="1">
    <location>
        <position position="449"/>
    </location>
    <ligand>
        <name>Mg(2+)</name>
        <dbReference type="ChEBI" id="CHEBI:18420"/>
        <note>shared with alpha subunit</note>
    </ligand>
</feature>
<feature type="binding site" evidence="1">
    <location>
        <position position="450"/>
    </location>
    <ligand>
        <name>Mg(2+)</name>
        <dbReference type="ChEBI" id="CHEBI:18420"/>
        <note>shared with alpha subunit</note>
    </ligand>
</feature>
<name>SYFB_MYCPU</name>
<gene>
    <name evidence="1" type="primary">pheT</name>
    <name type="ordered locus">MYPU_3470</name>
</gene>